<proteinExistence type="evidence at protein level"/>
<gene>
    <name type="primary">Rit2</name>
    <name type="synonym">Rin</name>
    <name type="synonym">Roc2</name>
</gene>
<dbReference type="EC" id="3.6.5.2" evidence="3"/>
<dbReference type="EMBL" id="U71202">
    <property type="protein sequence ID" value="AAB42212.1"/>
    <property type="molecule type" value="mRNA"/>
</dbReference>
<dbReference type="EMBL" id="AF084463">
    <property type="protein sequence ID" value="AAD13022.1"/>
    <property type="molecule type" value="mRNA"/>
</dbReference>
<dbReference type="EMBL" id="AK040743">
    <property type="protein sequence ID" value="BAC30690.1"/>
    <property type="molecule type" value="mRNA"/>
</dbReference>
<dbReference type="EMBL" id="AK046425">
    <property type="protein sequence ID" value="BAC32724.1"/>
    <property type="molecule type" value="mRNA"/>
</dbReference>
<dbReference type="EMBL" id="AK046484">
    <property type="protein sequence ID" value="BAC32750.1"/>
    <property type="molecule type" value="mRNA"/>
</dbReference>
<dbReference type="EMBL" id="AK138206">
    <property type="protein sequence ID" value="BAE23581.1"/>
    <property type="status" value="ALT_INIT"/>
    <property type="molecule type" value="mRNA"/>
</dbReference>
<dbReference type="EMBL" id="AK139394">
    <property type="protein sequence ID" value="BAE23992.1"/>
    <property type="molecule type" value="mRNA"/>
</dbReference>
<dbReference type="EMBL" id="AK140133">
    <property type="protein sequence ID" value="BAE24250.1"/>
    <property type="molecule type" value="mRNA"/>
</dbReference>
<dbReference type="EMBL" id="AK140726">
    <property type="protein sequence ID" value="BAE24457.1"/>
    <property type="molecule type" value="mRNA"/>
</dbReference>
<dbReference type="EMBL" id="AK162862">
    <property type="protein sequence ID" value="BAE37088.1"/>
    <property type="molecule type" value="mRNA"/>
</dbReference>
<dbReference type="EMBL" id="AK162953">
    <property type="protein sequence ID" value="BAE37131.1"/>
    <property type="molecule type" value="mRNA"/>
</dbReference>
<dbReference type="EMBL" id="BC018267">
    <property type="protein sequence ID" value="AAH18267.1"/>
    <property type="molecule type" value="mRNA"/>
</dbReference>
<dbReference type="CCDS" id="CCDS29108.1"/>
<dbReference type="RefSeq" id="NP_033091.1">
    <property type="nucleotide sequence ID" value="NM_009065.2"/>
</dbReference>
<dbReference type="SMR" id="P70425"/>
<dbReference type="BioGRID" id="202893">
    <property type="interactions" value="1"/>
</dbReference>
<dbReference type="FunCoup" id="P70425">
    <property type="interactions" value="316"/>
</dbReference>
<dbReference type="IntAct" id="P70425">
    <property type="interactions" value="4"/>
</dbReference>
<dbReference type="MINT" id="P70425"/>
<dbReference type="STRING" id="10090.ENSMUSP00000114323"/>
<dbReference type="PhosphoSitePlus" id="P70425"/>
<dbReference type="SwissPalm" id="P70425"/>
<dbReference type="PaxDb" id="10090-ENSMUSP00000114323"/>
<dbReference type="ProteomicsDB" id="254888"/>
<dbReference type="Antibodypedia" id="8862">
    <property type="antibodies" value="289 antibodies from 29 providers"/>
</dbReference>
<dbReference type="DNASU" id="19762"/>
<dbReference type="Ensembl" id="ENSMUST00000153060.8">
    <property type="protein sequence ID" value="ENSMUSP00000114323.2"/>
    <property type="gene ID" value="ENSMUSG00000057455.13"/>
</dbReference>
<dbReference type="GeneID" id="19762"/>
<dbReference type="KEGG" id="mmu:19762"/>
<dbReference type="UCSC" id="uc008ehx.1">
    <property type="organism name" value="mouse"/>
</dbReference>
<dbReference type="AGR" id="MGI:108054"/>
<dbReference type="CTD" id="6014"/>
<dbReference type="MGI" id="MGI:108054">
    <property type="gene designation" value="Rit2"/>
</dbReference>
<dbReference type="VEuPathDB" id="HostDB:ENSMUSG00000057455"/>
<dbReference type="eggNOG" id="KOG0395">
    <property type="taxonomic scope" value="Eukaryota"/>
</dbReference>
<dbReference type="GeneTree" id="ENSGT00940000161402"/>
<dbReference type="HOGENOM" id="CLU_041217_9_5_1"/>
<dbReference type="InParanoid" id="P70425"/>
<dbReference type="OMA" id="FRRKQRH"/>
<dbReference type="OrthoDB" id="5976022at2759"/>
<dbReference type="PhylomeDB" id="P70425"/>
<dbReference type="TreeFam" id="TF315072"/>
<dbReference type="BioGRID-ORCS" id="19762">
    <property type="hits" value="2 hits in 76 CRISPR screens"/>
</dbReference>
<dbReference type="ChiTaRS" id="Rit2">
    <property type="organism name" value="mouse"/>
</dbReference>
<dbReference type="PRO" id="PR:P70425"/>
<dbReference type="Proteomes" id="UP000000589">
    <property type="component" value="Chromosome 18"/>
</dbReference>
<dbReference type="RNAct" id="P70425">
    <property type="molecule type" value="protein"/>
</dbReference>
<dbReference type="Bgee" id="ENSMUSG00000057455">
    <property type="expression patterns" value="Expressed in ventral tegmental area and 117 other cell types or tissues"/>
</dbReference>
<dbReference type="ExpressionAtlas" id="P70425">
    <property type="expression patterns" value="baseline and differential"/>
</dbReference>
<dbReference type="GO" id="GO:0044297">
    <property type="term" value="C:cell body"/>
    <property type="evidence" value="ECO:0000314"/>
    <property type="project" value="ParkinsonsUK-UCL"/>
</dbReference>
<dbReference type="GO" id="GO:0005737">
    <property type="term" value="C:cytoplasm"/>
    <property type="evidence" value="ECO:0000314"/>
    <property type="project" value="ParkinsonsUK-UCL"/>
</dbReference>
<dbReference type="GO" id="GO:0005829">
    <property type="term" value="C:cytosol"/>
    <property type="evidence" value="ECO:0007669"/>
    <property type="project" value="Ensembl"/>
</dbReference>
<dbReference type="GO" id="GO:0097447">
    <property type="term" value="C:dendritic tree"/>
    <property type="evidence" value="ECO:0000314"/>
    <property type="project" value="ParkinsonsUK-UCL"/>
</dbReference>
<dbReference type="GO" id="GO:0005794">
    <property type="term" value="C:Golgi apparatus"/>
    <property type="evidence" value="ECO:0007669"/>
    <property type="project" value="Ensembl"/>
</dbReference>
<dbReference type="GO" id="GO:0045121">
    <property type="term" value="C:membrane raft"/>
    <property type="evidence" value="ECO:0007669"/>
    <property type="project" value="Ensembl"/>
</dbReference>
<dbReference type="GO" id="GO:0005654">
    <property type="term" value="C:nucleoplasm"/>
    <property type="evidence" value="ECO:0007669"/>
    <property type="project" value="Ensembl"/>
</dbReference>
<dbReference type="GO" id="GO:0005634">
    <property type="term" value="C:nucleus"/>
    <property type="evidence" value="ECO:0000314"/>
    <property type="project" value="ParkinsonsUK-UCL"/>
</dbReference>
<dbReference type="GO" id="GO:0005886">
    <property type="term" value="C:plasma membrane"/>
    <property type="evidence" value="ECO:0000314"/>
    <property type="project" value="ParkinsonsUK-UCL"/>
</dbReference>
<dbReference type="GO" id="GO:0005516">
    <property type="term" value="F:calmodulin binding"/>
    <property type="evidence" value="ECO:0000314"/>
    <property type="project" value="ParkinsonsUK-UCL"/>
</dbReference>
<dbReference type="GO" id="GO:0003682">
    <property type="term" value="F:chromatin binding"/>
    <property type="evidence" value="ECO:0000316"/>
    <property type="project" value="ParkinsonsUK-UCL"/>
</dbReference>
<dbReference type="GO" id="GO:0003925">
    <property type="term" value="F:G protein activity"/>
    <property type="evidence" value="ECO:0007669"/>
    <property type="project" value="UniProtKB-EC"/>
</dbReference>
<dbReference type="GO" id="GO:0005525">
    <property type="term" value="F:GTP binding"/>
    <property type="evidence" value="ECO:0000314"/>
    <property type="project" value="ParkinsonsUK-UCL"/>
</dbReference>
<dbReference type="GO" id="GO:0003924">
    <property type="term" value="F:GTPase activity"/>
    <property type="evidence" value="ECO:0000314"/>
    <property type="project" value="ParkinsonsUK-UCL"/>
</dbReference>
<dbReference type="GO" id="GO:0030215">
    <property type="term" value="F:semaphorin receptor binding"/>
    <property type="evidence" value="ECO:0007669"/>
    <property type="project" value="Ensembl"/>
</dbReference>
<dbReference type="GO" id="GO:0007189">
    <property type="term" value="P:adenylate cyclase-activating G protein-coupled receptor signaling pathway"/>
    <property type="evidence" value="ECO:0007669"/>
    <property type="project" value="Ensembl"/>
</dbReference>
<dbReference type="GO" id="GO:0032507">
    <property type="term" value="P:maintenance of protein location in cell"/>
    <property type="evidence" value="ECO:0007669"/>
    <property type="project" value="Ensembl"/>
</dbReference>
<dbReference type="GO" id="GO:0010977">
    <property type="term" value="P:negative regulation of neuron projection development"/>
    <property type="evidence" value="ECO:0000316"/>
    <property type="project" value="ParkinsonsUK-UCL"/>
</dbReference>
<dbReference type="GO" id="GO:0043410">
    <property type="term" value="P:positive regulation of MAPK cascade"/>
    <property type="evidence" value="ECO:0000250"/>
    <property type="project" value="ParkinsonsUK-UCL"/>
</dbReference>
<dbReference type="GO" id="GO:0010976">
    <property type="term" value="P:positive regulation of neuron projection development"/>
    <property type="evidence" value="ECO:0000314"/>
    <property type="project" value="ParkinsonsUK-UCL"/>
</dbReference>
<dbReference type="GO" id="GO:0045944">
    <property type="term" value="P:positive regulation of transcription by RNA polymerase II"/>
    <property type="evidence" value="ECO:0000316"/>
    <property type="project" value="ParkinsonsUK-UCL"/>
</dbReference>
<dbReference type="GO" id="GO:0007265">
    <property type="term" value="P:Ras protein signal transduction"/>
    <property type="evidence" value="ECO:0000314"/>
    <property type="project" value="ARUK-UCL"/>
</dbReference>
<dbReference type="GO" id="GO:0050848">
    <property type="term" value="P:regulation of calcium-mediated signaling"/>
    <property type="evidence" value="ECO:0007669"/>
    <property type="project" value="Ensembl"/>
</dbReference>
<dbReference type="GO" id="GO:0032489">
    <property type="term" value="P:regulation of Cdc42 protein signal transduction"/>
    <property type="evidence" value="ECO:0000314"/>
    <property type="project" value="ParkinsonsUK-UCL"/>
</dbReference>
<dbReference type="GO" id="GO:0030100">
    <property type="term" value="P:regulation of endocytosis"/>
    <property type="evidence" value="ECO:0007669"/>
    <property type="project" value="Ensembl"/>
</dbReference>
<dbReference type="CDD" id="cd04141">
    <property type="entry name" value="Rit_Rin_Ric"/>
    <property type="match status" value="1"/>
</dbReference>
<dbReference type="FunFam" id="3.40.50.300:FF:000343">
    <property type="entry name" value="Ras family gtpase"/>
    <property type="match status" value="1"/>
</dbReference>
<dbReference type="Gene3D" id="3.40.50.300">
    <property type="entry name" value="P-loop containing nucleotide triphosphate hydrolases"/>
    <property type="match status" value="1"/>
</dbReference>
<dbReference type="InterPro" id="IPR027417">
    <property type="entry name" value="P-loop_NTPase"/>
</dbReference>
<dbReference type="InterPro" id="IPR005225">
    <property type="entry name" value="Small_GTP-bd"/>
</dbReference>
<dbReference type="InterPro" id="IPR001806">
    <property type="entry name" value="Small_GTPase"/>
</dbReference>
<dbReference type="InterPro" id="IPR020849">
    <property type="entry name" value="Small_GTPase_Ras-type"/>
</dbReference>
<dbReference type="NCBIfam" id="TIGR00231">
    <property type="entry name" value="small_GTP"/>
    <property type="match status" value="1"/>
</dbReference>
<dbReference type="PANTHER" id="PTHR24070">
    <property type="entry name" value="RAS, DI-RAS, AND RHEB FAMILY MEMBERS OF SMALL GTPASE SUPERFAMILY"/>
    <property type="match status" value="1"/>
</dbReference>
<dbReference type="Pfam" id="PF00071">
    <property type="entry name" value="Ras"/>
    <property type="match status" value="1"/>
</dbReference>
<dbReference type="PRINTS" id="PR00449">
    <property type="entry name" value="RASTRNSFRMNG"/>
</dbReference>
<dbReference type="SMART" id="SM00175">
    <property type="entry name" value="RAB"/>
    <property type="match status" value="1"/>
</dbReference>
<dbReference type="SMART" id="SM00176">
    <property type="entry name" value="RAN"/>
    <property type="match status" value="1"/>
</dbReference>
<dbReference type="SMART" id="SM00173">
    <property type="entry name" value="RAS"/>
    <property type="match status" value="1"/>
</dbReference>
<dbReference type="SMART" id="SM00174">
    <property type="entry name" value="RHO"/>
    <property type="match status" value="1"/>
</dbReference>
<dbReference type="SUPFAM" id="SSF52540">
    <property type="entry name" value="P-loop containing nucleoside triphosphate hydrolases"/>
    <property type="match status" value="1"/>
</dbReference>
<dbReference type="PROSITE" id="PS51421">
    <property type="entry name" value="RAS"/>
    <property type="match status" value="1"/>
</dbReference>
<reference key="1">
    <citation type="journal article" date="1996" name="J. Neurosci.">
        <title>Rin, a neuron-specific and calmodulin-binding small G-protein, and Rit define a novel subfamily of ras proteins.</title>
        <authorList>
            <person name="Lee C.H.J."/>
            <person name="Della N.G."/>
            <person name="Chew C.E."/>
            <person name="Zack D.J."/>
        </authorList>
    </citation>
    <scope>NUCLEOTIDE SEQUENCE [MRNA]</scope>
    <scope>CHARACTERIZATION</scope>
    <scope>TISSUE SPECIFICITY</scope>
    <source>
        <tissue>Retina</tissue>
    </source>
</reference>
<reference key="2">
    <citation type="journal article" date="1999" name="Arch. Biochem. Biophys.">
        <title>Biochemical characterization of the Ras-related GTPases Rit and Rin.</title>
        <authorList>
            <person name="Shao H."/>
            <person name="Kadono-Okuda K."/>
            <person name="Finlin B.S."/>
            <person name="Andres D.A."/>
        </authorList>
    </citation>
    <scope>NUCLEOTIDE SEQUENCE [MRNA]</scope>
    <scope>CATALYTIC ACTIVITY</scope>
    <scope>INTERACTION WITH AFDN; RALGDS AND RLF</scope>
    <scope>MUTAGENESIS OF SER-34; THR-52 AND GLN-78</scope>
</reference>
<reference key="3">
    <citation type="journal article" date="2005" name="Science">
        <title>The transcriptional landscape of the mammalian genome.</title>
        <authorList>
            <person name="Carninci P."/>
            <person name="Kasukawa T."/>
            <person name="Katayama S."/>
            <person name="Gough J."/>
            <person name="Frith M.C."/>
            <person name="Maeda N."/>
            <person name="Oyama R."/>
            <person name="Ravasi T."/>
            <person name="Lenhard B."/>
            <person name="Wells C."/>
            <person name="Kodzius R."/>
            <person name="Shimokawa K."/>
            <person name="Bajic V.B."/>
            <person name="Brenner S.E."/>
            <person name="Batalov S."/>
            <person name="Forrest A.R."/>
            <person name="Zavolan M."/>
            <person name="Davis M.J."/>
            <person name="Wilming L.G."/>
            <person name="Aidinis V."/>
            <person name="Allen J.E."/>
            <person name="Ambesi-Impiombato A."/>
            <person name="Apweiler R."/>
            <person name="Aturaliya R.N."/>
            <person name="Bailey T.L."/>
            <person name="Bansal M."/>
            <person name="Baxter L."/>
            <person name="Beisel K.W."/>
            <person name="Bersano T."/>
            <person name="Bono H."/>
            <person name="Chalk A.M."/>
            <person name="Chiu K.P."/>
            <person name="Choudhary V."/>
            <person name="Christoffels A."/>
            <person name="Clutterbuck D.R."/>
            <person name="Crowe M.L."/>
            <person name="Dalla E."/>
            <person name="Dalrymple B.P."/>
            <person name="de Bono B."/>
            <person name="Della Gatta G."/>
            <person name="di Bernardo D."/>
            <person name="Down T."/>
            <person name="Engstrom P."/>
            <person name="Fagiolini M."/>
            <person name="Faulkner G."/>
            <person name="Fletcher C.F."/>
            <person name="Fukushima T."/>
            <person name="Furuno M."/>
            <person name="Futaki S."/>
            <person name="Gariboldi M."/>
            <person name="Georgii-Hemming P."/>
            <person name="Gingeras T.R."/>
            <person name="Gojobori T."/>
            <person name="Green R.E."/>
            <person name="Gustincich S."/>
            <person name="Harbers M."/>
            <person name="Hayashi Y."/>
            <person name="Hensch T.K."/>
            <person name="Hirokawa N."/>
            <person name="Hill D."/>
            <person name="Huminiecki L."/>
            <person name="Iacono M."/>
            <person name="Ikeo K."/>
            <person name="Iwama A."/>
            <person name="Ishikawa T."/>
            <person name="Jakt M."/>
            <person name="Kanapin A."/>
            <person name="Katoh M."/>
            <person name="Kawasawa Y."/>
            <person name="Kelso J."/>
            <person name="Kitamura H."/>
            <person name="Kitano H."/>
            <person name="Kollias G."/>
            <person name="Krishnan S.P."/>
            <person name="Kruger A."/>
            <person name="Kummerfeld S.K."/>
            <person name="Kurochkin I.V."/>
            <person name="Lareau L.F."/>
            <person name="Lazarevic D."/>
            <person name="Lipovich L."/>
            <person name="Liu J."/>
            <person name="Liuni S."/>
            <person name="McWilliam S."/>
            <person name="Madan Babu M."/>
            <person name="Madera M."/>
            <person name="Marchionni L."/>
            <person name="Matsuda H."/>
            <person name="Matsuzawa S."/>
            <person name="Miki H."/>
            <person name="Mignone F."/>
            <person name="Miyake S."/>
            <person name="Morris K."/>
            <person name="Mottagui-Tabar S."/>
            <person name="Mulder N."/>
            <person name="Nakano N."/>
            <person name="Nakauchi H."/>
            <person name="Ng P."/>
            <person name="Nilsson R."/>
            <person name="Nishiguchi S."/>
            <person name="Nishikawa S."/>
            <person name="Nori F."/>
            <person name="Ohara O."/>
            <person name="Okazaki Y."/>
            <person name="Orlando V."/>
            <person name="Pang K.C."/>
            <person name="Pavan W.J."/>
            <person name="Pavesi G."/>
            <person name="Pesole G."/>
            <person name="Petrovsky N."/>
            <person name="Piazza S."/>
            <person name="Reed J."/>
            <person name="Reid J.F."/>
            <person name="Ring B.Z."/>
            <person name="Ringwald M."/>
            <person name="Rost B."/>
            <person name="Ruan Y."/>
            <person name="Salzberg S.L."/>
            <person name="Sandelin A."/>
            <person name="Schneider C."/>
            <person name="Schoenbach C."/>
            <person name="Sekiguchi K."/>
            <person name="Semple C.A."/>
            <person name="Seno S."/>
            <person name="Sessa L."/>
            <person name="Sheng Y."/>
            <person name="Shibata Y."/>
            <person name="Shimada H."/>
            <person name="Shimada K."/>
            <person name="Silva D."/>
            <person name="Sinclair B."/>
            <person name="Sperling S."/>
            <person name="Stupka E."/>
            <person name="Sugiura K."/>
            <person name="Sultana R."/>
            <person name="Takenaka Y."/>
            <person name="Taki K."/>
            <person name="Tammoja K."/>
            <person name="Tan S.L."/>
            <person name="Tang S."/>
            <person name="Taylor M.S."/>
            <person name="Tegner J."/>
            <person name="Teichmann S.A."/>
            <person name="Ueda H.R."/>
            <person name="van Nimwegen E."/>
            <person name="Verardo R."/>
            <person name="Wei C.L."/>
            <person name="Yagi K."/>
            <person name="Yamanishi H."/>
            <person name="Zabarovsky E."/>
            <person name="Zhu S."/>
            <person name="Zimmer A."/>
            <person name="Hide W."/>
            <person name="Bult C."/>
            <person name="Grimmond S.M."/>
            <person name="Teasdale R.D."/>
            <person name="Liu E.T."/>
            <person name="Brusic V."/>
            <person name="Quackenbush J."/>
            <person name="Wahlestedt C."/>
            <person name="Mattick J.S."/>
            <person name="Hume D.A."/>
            <person name="Kai C."/>
            <person name="Sasaki D."/>
            <person name="Tomaru Y."/>
            <person name="Fukuda S."/>
            <person name="Kanamori-Katayama M."/>
            <person name="Suzuki M."/>
            <person name="Aoki J."/>
            <person name="Arakawa T."/>
            <person name="Iida J."/>
            <person name="Imamura K."/>
            <person name="Itoh M."/>
            <person name="Kato T."/>
            <person name="Kawaji H."/>
            <person name="Kawagashira N."/>
            <person name="Kawashima T."/>
            <person name="Kojima M."/>
            <person name="Kondo S."/>
            <person name="Konno H."/>
            <person name="Nakano K."/>
            <person name="Ninomiya N."/>
            <person name="Nishio T."/>
            <person name="Okada M."/>
            <person name="Plessy C."/>
            <person name="Shibata K."/>
            <person name="Shiraki T."/>
            <person name="Suzuki S."/>
            <person name="Tagami M."/>
            <person name="Waki K."/>
            <person name="Watahiki A."/>
            <person name="Okamura-Oho Y."/>
            <person name="Suzuki H."/>
            <person name="Kawai J."/>
            <person name="Hayashizaki Y."/>
        </authorList>
    </citation>
    <scope>NUCLEOTIDE SEQUENCE [LARGE SCALE MRNA]</scope>
    <source>
        <strain>C57BL/6J</strain>
        <tissue>Blood vessel</tissue>
        <tissue>Brain cortex</tissue>
        <tissue>Corpora quadrigemina</tissue>
        <tissue>Corpus striatum</tissue>
        <tissue>Hypothalamus</tissue>
        <tissue>Spinal cord</tissue>
    </source>
</reference>
<reference key="4">
    <citation type="journal article" date="2004" name="Genome Res.">
        <title>The status, quality, and expansion of the NIH full-length cDNA project: the Mammalian Gene Collection (MGC).</title>
        <authorList>
            <consortium name="The MGC Project Team"/>
        </authorList>
    </citation>
    <scope>NUCLEOTIDE SEQUENCE [LARGE SCALE MRNA]</scope>
    <source>
        <tissue>Retina</tissue>
    </source>
</reference>
<reference key="5">
    <citation type="journal article" date="2003" name="Oncogene">
        <title>Functional interaction between the small GTP-binding protein Rin and the N-terminal of Brn-3a transcription factor.</title>
        <authorList>
            <person name="Calissano M."/>
            <person name="Latchman D.S."/>
        </authorList>
    </citation>
    <scope>FUNCTION</scope>
    <scope>INTERACTION WITH POU4F1</scope>
    <scope>MUTAGENESIS OF GLN-78</scope>
</reference>
<reference key="6">
    <citation type="journal article" date="2010" name="Cell">
        <title>A tissue-specific atlas of mouse protein phosphorylation and expression.</title>
        <authorList>
            <person name="Huttlin E.L."/>
            <person name="Jedrychowski M.P."/>
            <person name="Elias J.E."/>
            <person name="Goswami T."/>
            <person name="Rad R."/>
            <person name="Beausoleil S.A."/>
            <person name="Villen J."/>
            <person name="Haas W."/>
            <person name="Sowa M.E."/>
            <person name="Gygi S.P."/>
        </authorList>
    </citation>
    <scope>IDENTIFICATION BY MASS SPECTROMETRY [LARGE SCALE ANALYSIS]</scope>
    <source>
        <tissue>Brain</tissue>
    </source>
</reference>
<reference key="7">
    <citation type="journal article" date="2013" name="Mol. Vis.">
        <title>RIT2, a neuron-specific small guanosine triphosphatase, is expressed in retinal neuronal cells and its promoter is modulated by the POU4 transcription factors.</title>
        <authorList>
            <person name="Zhang L."/>
            <person name="Wahlin K."/>
            <person name="Li Y."/>
            <person name="Masuda T."/>
            <person name="Yang Z."/>
            <person name="Zack D.J."/>
            <person name="Esumi N."/>
        </authorList>
    </citation>
    <scope>SUBCELLULAR LOCATION</scope>
    <scope>TISSUE SPECIFICITY</scope>
    <scope>DEVELOPMENTAL STAGE</scope>
</reference>
<name>RIT2_MOUSE</name>
<comment type="function">
    <text evidence="4">Binds and exchanges GTP and GDP. Binds and modulates the activation of POU4F1 as gene expression regulator.</text>
</comment>
<comment type="catalytic activity">
    <reaction evidence="3">
        <text>GTP + H2O = GDP + phosphate + H(+)</text>
        <dbReference type="Rhea" id="RHEA:19669"/>
        <dbReference type="ChEBI" id="CHEBI:15377"/>
        <dbReference type="ChEBI" id="CHEBI:15378"/>
        <dbReference type="ChEBI" id="CHEBI:37565"/>
        <dbReference type="ChEBI" id="CHEBI:43474"/>
        <dbReference type="ChEBI" id="CHEBI:58189"/>
        <dbReference type="EC" id="3.6.5.2"/>
    </reaction>
</comment>
<comment type="activity regulation">
    <text>Alternates between an inactive form bound to GDP and an active form bound to GTP.</text>
</comment>
<comment type="subunit">
    <text evidence="2 3 4">Interacts with PLXNB3 (By similarity). Interacts with AFDN, the C-terminal domain of RALGDS and RLF, but not with RIN1 and PIK3CA. RLF binds exclusively to the active GTP-bound form. Binds calmodulin. Interacts with POU4F1 (via N-terminus); the interaction controls POU4F1 transactivation activity on some neuronal target genes (PubMed:12934100).</text>
</comment>
<comment type="interaction">
    <interactant intactId="EBI-2649620">
        <id>P70425</id>
    </interactant>
    <interactant intactId="EBI-958266">
        <id>Q13129</id>
        <label>RLF</label>
    </interactant>
    <organismsDiffer>true</organismsDiffer>
    <experiments>2</experiments>
</comment>
<comment type="subcellular location">
    <subcellularLocation>
        <location evidence="5">Nucleus</location>
    </subcellularLocation>
    <subcellularLocation>
        <location evidence="5">Cell membrane</location>
    </subcellularLocation>
    <text evidence="2">Colocalizes with PLXNB3 at the plasma membrane.</text>
</comment>
<comment type="tissue specificity">
    <text evidence="5 6">Expressed in ganglion cell layer (GCL), inner plexiform layer (IPL) and inner nuclear layer (INL) of the retina. Expressed in retinal ganglion cells (RGCs). Expressed in horizontal, bipolar and amacrine cells, but not Mueller glia, of the INL (at protein level). Neuron-specific (PubMed:8824319). Expressed in ganglion cell layer (GCL) and inner plexiform layer (IPL) (PubMed:23805044).</text>
</comment>
<comment type="developmental stage">
    <text evidence="5">Expressed weakly in ganglion cell layer (GCL) and inner neuroblastic layer (NBL) of the embryonic retina at 15.5 dpc. Expression increases progressively in the retina from new borns at postnatal day 2 (P2), P5, P15 to 8 week-old adult (at protein level).</text>
</comment>
<comment type="miscellaneous">
    <text>Shows rapid uncatalyzed guanine nucleotide dissociation rates, which are much faster than those of most Ras subfamily members.</text>
</comment>
<comment type="similarity">
    <text evidence="7">Belongs to the small GTPase superfamily. Ras family.</text>
</comment>
<comment type="sequence caution" evidence="7">
    <conflict type="erroneous initiation">
        <sequence resource="EMBL-CDS" id="BAE23581"/>
    </conflict>
    <text>Truncated N-terminus.</text>
</comment>
<accession>P70425</accession>
<accession>Q3UST1</accession>
<accession>Q3UUP4</accession>
<accession>Q8BQT5</accession>
<accession>Q9QWX5</accession>
<organism>
    <name type="scientific">Mus musculus</name>
    <name type="common">Mouse</name>
    <dbReference type="NCBI Taxonomy" id="10090"/>
    <lineage>
        <taxon>Eukaryota</taxon>
        <taxon>Metazoa</taxon>
        <taxon>Chordata</taxon>
        <taxon>Craniata</taxon>
        <taxon>Vertebrata</taxon>
        <taxon>Euteleostomi</taxon>
        <taxon>Mammalia</taxon>
        <taxon>Eutheria</taxon>
        <taxon>Euarchontoglires</taxon>
        <taxon>Glires</taxon>
        <taxon>Rodentia</taxon>
        <taxon>Myomorpha</taxon>
        <taxon>Muroidea</taxon>
        <taxon>Muridae</taxon>
        <taxon>Murinae</taxon>
        <taxon>Mus</taxon>
        <taxon>Mus</taxon>
    </lineage>
</organism>
<protein>
    <recommendedName>
        <fullName>GTP-binding protein Rit2</fullName>
        <ecNumber evidence="3">3.6.5.2</ecNumber>
    </recommendedName>
    <alternativeName>
        <fullName>Ras-like protein expressed in neurons</fullName>
    </alternativeName>
    <alternativeName>
        <fullName>Ras-like without CAAX protein 2</fullName>
    </alternativeName>
</protein>
<keyword id="KW-0112">Calmodulin-binding</keyword>
<keyword id="KW-1003">Cell membrane</keyword>
<keyword id="KW-0342">GTP-binding</keyword>
<keyword id="KW-0378">Hydrolase</keyword>
<keyword id="KW-0472">Membrane</keyword>
<keyword id="KW-0547">Nucleotide-binding</keyword>
<keyword id="KW-0539">Nucleus</keyword>
<keyword id="KW-1185">Reference proteome</keyword>
<feature type="chain" id="PRO_0000082728" description="GTP-binding protein Rit2">
    <location>
        <begin position="1"/>
        <end position="217"/>
    </location>
</feature>
<feature type="binding site" evidence="1">
    <location>
        <begin position="27"/>
        <end position="34"/>
    </location>
    <ligand>
        <name>GTP</name>
        <dbReference type="ChEBI" id="CHEBI:37565"/>
    </ligand>
</feature>
<feature type="binding site" evidence="1">
    <location>
        <begin position="74"/>
        <end position="78"/>
    </location>
    <ligand>
        <name>GTP</name>
        <dbReference type="ChEBI" id="CHEBI:37565"/>
    </ligand>
</feature>
<feature type="binding site" evidence="1">
    <location>
        <begin position="133"/>
        <end position="136"/>
    </location>
    <ligand>
        <name>GTP</name>
        <dbReference type="ChEBI" id="CHEBI:37565"/>
    </ligand>
</feature>
<feature type="mutagenesis site" description="Dominant negative. Loss of interaction with AFDN, RLF and RALGDS." evidence="3">
    <original>S</original>
    <variation>N</variation>
    <location>
        <position position="34"/>
    </location>
</feature>
<feature type="mutagenesis site" description="Loss of interaction with AFDN, RLF and RALGDS; when associated with L-78." evidence="3">
    <original>T</original>
    <variation>A</variation>
    <location>
        <position position="52"/>
    </location>
</feature>
<feature type="mutagenesis site" description="Constitutively active. Dramatic reduction of the rate of GTP hydrolysis." evidence="3">
    <original>Q</original>
    <variation>L</variation>
    <location>
        <position position="78"/>
    </location>
</feature>
<feature type="sequence conflict" description="In Ref. 2; AAD13022." evidence="7" ref="2">
    <original>V</original>
    <variation>A</variation>
    <location>
        <position position="3"/>
    </location>
</feature>
<feature type="sequence conflict" description="In Ref. 2; AAD13022." evidence="7" ref="2">
    <original>N</original>
    <variation>T</variation>
    <location>
        <position position="150"/>
    </location>
</feature>
<feature type="sequence conflict" description="In Ref. 3; BAC32750." evidence="7" ref="3">
    <original>G</original>
    <variation>S</variation>
    <location>
        <position position="176"/>
    </location>
</feature>
<feature type="sequence conflict" description="In Ref. 2; AAD13022." evidence="7" ref="2">
    <original>L</original>
    <variation>I</variation>
    <location>
        <position position="217"/>
    </location>
</feature>
<evidence type="ECO:0000250" key="1"/>
<evidence type="ECO:0000250" key="2">
    <source>
        <dbReference type="UniProtKB" id="Q99578"/>
    </source>
</evidence>
<evidence type="ECO:0000269" key="3">
    <source>
    </source>
</evidence>
<evidence type="ECO:0000269" key="4">
    <source>
    </source>
</evidence>
<evidence type="ECO:0000269" key="5">
    <source>
    </source>
</evidence>
<evidence type="ECO:0000269" key="6">
    <source>
    </source>
</evidence>
<evidence type="ECO:0000305" key="7"/>
<sequence length="217" mass="24802">MEVENEAHCCPGSSSGGSREYKVVMLGAGGVGKSAVTMQFISHQFPDYHDPTIEDAYKTQVRIDNEPAYLDILDTAGQAEFTAMREQYMRGGEGFIICYSVTDRQSFQEAAKFKELIFQVRHTYEIPLVLVGNKIDLEQFRQVSTEEGMNLARDYNCAFFETSAALRFGIDDAFQGLVREIRRKESMLSLVERKLKRKDSLWKKIKASLKKKRENML</sequence>